<protein>
    <recommendedName>
        <fullName evidence="1">Putative membrane protein insertion efficiency factor</fullName>
    </recommendedName>
</protein>
<accession>B1JRQ3</accession>
<keyword id="KW-0997">Cell inner membrane</keyword>
<keyword id="KW-1003">Cell membrane</keyword>
<keyword id="KW-0472">Membrane</keyword>
<gene>
    <name type="ordered locus">YPK_4247</name>
</gene>
<name>YIDD_YERPY</name>
<feature type="chain" id="PRO_1000122680" description="Putative membrane protein insertion efficiency factor">
    <location>
        <begin position="1"/>
        <end position="85"/>
    </location>
</feature>
<feature type="region of interest" description="Disordered" evidence="2">
    <location>
        <begin position="66"/>
        <end position="85"/>
    </location>
</feature>
<sequence length="85" mass="9458">MASPLSPGSRILIGLIRGYQLVISPLLGPRCRFHPTCSHYGIEALRRFGMIKGSWLTLKRVLKCHPLNSGGDDPVPPKLDDNREH</sequence>
<reference key="1">
    <citation type="submission" date="2008-02" db="EMBL/GenBank/DDBJ databases">
        <title>Complete sequence of Yersinia pseudotuberculosis YPIII.</title>
        <authorList>
            <consortium name="US DOE Joint Genome Institute"/>
            <person name="Copeland A."/>
            <person name="Lucas S."/>
            <person name="Lapidus A."/>
            <person name="Glavina del Rio T."/>
            <person name="Dalin E."/>
            <person name="Tice H."/>
            <person name="Bruce D."/>
            <person name="Goodwin L."/>
            <person name="Pitluck S."/>
            <person name="Munk A.C."/>
            <person name="Brettin T."/>
            <person name="Detter J.C."/>
            <person name="Han C."/>
            <person name="Tapia R."/>
            <person name="Schmutz J."/>
            <person name="Larimer F."/>
            <person name="Land M."/>
            <person name="Hauser L."/>
            <person name="Challacombe J.F."/>
            <person name="Green L."/>
            <person name="Lindler L.E."/>
            <person name="Nikolich M.P."/>
            <person name="Richardson P."/>
        </authorList>
    </citation>
    <scope>NUCLEOTIDE SEQUENCE [LARGE SCALE GENOMIC DNA]</scope>
    <source>
        <strain>YPIII</strain>
    </source>
</reference>
<comment type="function">
    <text evidence="1">Could be involved in insertion of integral membrane proteins into the membrane.</text>
</comment>
<comment type="subcellular location">
    <subcellularLocation>
        <location evidence="1">Cell inner membrane</location>
        <topology evidence="1">Peripheral membrane protein</topology>
        <orientation evidence="1">Cytoplasmic side</orientation>
    </subcellularLocation>
</comment>
<comment type="similarity">
    <text evidence="1">Belongs to the UPF0161 family.</text>
</comment>
<dbReference type="EMBL" id="CP000950">
    <property type="protein sequence ID" value="ACA70503.1"/>
    <property type="molecule type" value="Genomic_DNA"/>
</dbReference>
<dbReference type="KEGG" id="ypy:YPK_4247"/>
<dbReference type="PATRIC" id="fig|502800.11.peg.599"/>
<dbReference type="GO" id="GO:0005886">
    <property type="term" value="C:plasma membrane"/>
    <property type="evidence" value="ECO:0007669"/>
    <property type="project" value="UniProtKB-SubCell"/>
</dbReference>
<dbReference type="HAMAP" id="MF_00386">
    <property type="entry name" value="UPF0161_YidD"/>
    <property type="match status" value="1"/>
</dbReference>
<dbReference type="InterPro" id="IPR002696">
    <property type="entry name" value="Membr_insert_effic_factor_YidD"/>
</dbReference>
<dbReference type="NCBIfam" id="TIGR00278">
    <property type="entry name" value="membrane protein insertion efficiency factor YidD"/>
    <property type="match status" value="1"/>
</dbReference>
<dbReference type="PANTHER" id="PTHR33383">
    <property type="entry name" value="MEMBRANE PROTEIN INSERTION EFFICIENCY FACTOR-RELATED"/>
    <property type="match status" value="1"/>
</dbReference>
<dbReference type="PANTHER" id="PTHR33383:SF1">
    <property type="entry name" value="MEMBRANE PROTEIN INSERTION EFFICIENCY FACTOR-RELATED"/>
    <property type="match status" value="1"/>
</dbReference>
<dbReference type="Pfam" id="PF01809">
    <property type="entry name" value="YidD"/>
    <property type="match status" value="1"/>
</dbReference>
<dbReference type="SMART" id="SM01234">
    <property type="entry name" value="Haemolytic"/>
    <property type="match status" value="1"/>
</dbReference>
<organism>
    <name type="scientific">Yersinia pseudotuberculosis serotype O:3 (strain YPIII)</name>
    <dbReference type="NCBI Taxonomy" id="502800"/>
    <lineage>
        <taxon>Bacteria</taxon>
        <taxon>Pseudomonadati</taxon>
        <taxon>Pseudomonadota</taxon>
        <taxon>Gammaproteobacteria</taxon>
        <taxon>Enterobacterales</taxon>
        <taxon>Yersiniaceae</taxon>
        <taxon>Yersinia</taxon>
    </lineage>
</organism>
<proteinExistence type="inferred from homology"/>
<evidence type="ECO:0000255" key="1">
    <source>
        <dbReference type="HAMAP-Rule" id="MF_00386"/>
    </source>
</evidence>
<evidence type="ECO:0000256" key="2">
    <source>
        <dbReference type="SAM" id="MobiDB-lite"/>
    </source>
</evidence>